<protein>
    <recommendedName>
        <fullName>Peptide methionine sulfoxide reductase MsrA/MsrB 1</fullName>
    </recommendedName>
    <domain>
        <recommendedName>
            <fullName>Peptide methionine sulfoxide reductase MsrA</fullName>
            <shortName>Protein-methionine-S-oxide reductase</shortName>
            <ecNumber>1.8.4.11</ecNumber>
        </recommendedName>
        <alternativeName>
            <fullName>Peptide-methionine (S)-S-oxide reductase</fullName>
            <shortName>Peptide Met(O) reductase</shortName>
        </alternativeName>
    </domain>
    <domain>
        <recommendedName>
            <fullName>Peptide methionine sulfoxide reductase MsrB</fullName>
            <ecNumber>1.8.4.12</ecNumber>
        </recommendedName>
        <alternativeName>
            <fullName>Peptide-methionine (R)-S-oxide reductase</fullName>
        </alternativeName>
    </domain>
</protein>
<comment type="function">
    <text evidence="1">Has an important function as a repair enzyme for proteins that have been inactivated by oxidation. Catalyzes the reversible oxidation-reduction of methionine sulfoxide in proteins to methionine.</text>
</comment>
<comment type="catalytic activity">
    <reaction>
        <text>L-methionyl-[protein] + [thioredoxin]-disulfide + H2O = L-methionyl-(S)-S-oxide-[protein] + [thioredoxin]-dithiol</text>
        <dbReference type="Rhea" id="RHEA:14217"/>
        <dbReference type="Rhea" id="RHEA-COMP:10698"/>
        <dbReference type="Rhea" id="RHEA-COMP:10700"/>
        <dbReference type="Rhea" id="RHEA-COMP:12313"/>
        <dbReference type="Rhea" id="RHEA-COMP:12315"/>
        <dbReference type="ChEBI" id="CHEBI:15377"/>
        <dbReference type="ChEBI" id="CHEBI:16044"/>
        <dbReference type="ChEBI" id="CHEBI:29950"/>
        <dbReference type="ChEBI" id="CHEBI:44120"/>
        <dbReference type="ChEBI" id="CHEBI:50058"/>
        <dbReference type="EC" id="1.8.4.11"/>
    </reaction>
</comment>
<comment type="catalytic activity">
    <reaction>
        <text>[thioredoxin]-disulfide + L-methionine + H2O = L-methionine (S)-S-oxide + [thioredoxin]-dithiol</text>
        <dbReference type="Rhea" id="RHEA:19993"/>
        <dbReference type="Rhea" id="RHEA-COMP:10698"/>
        <dbReference type="Rhea" id="RHEA-COMP:10700"/>
        <dbReference type="ChEBI" id="CHEBI:15377"/>
        <dbReference type="ChEBI" id="CHEBI:29950"/>
        <dbReference type="ChEBI" id="CHEBI:50058"/>
        <dbReference type="ChEBI" id="CHEBI:57844"/>
        <dbReference type="ChEBI" id="CHEBI:58772"/>
        <dbReference type="EC" id="1.8.4.11"/>
    </reaction>
</comment>
<comment type="catalytic activity">
    <reaction>
        <text>L-methionyl-[protein] + [thioredoxin]-disulfide + H2O = L-methionyl-(R)-S-oxide-[protein] + [thioredoxin]-dithiol</text>
        <dbReference type="Rhea" id="RHEA:24164"/>
        <dbReference type="Rhea" id="RHEA-COMP:10698"/>
        <dbReference type="Rhea" id="RHEA-COMP:10700"/>
        <dbReference type="Rhea" id="RHEA-COMP:12313"/>
        <dbReference type="Rhea" id="RHEA-COMP:12314"/>
        <dbReference type="ChEBI" id="CHEBI:15377"/>
        <dbReference type="ChEBI" id="CHEBI:16044"/>
        <dbReference type="ChEBI" id="CHEBI:29950"/>
        <dbReference type="ChEBI" id="CHEBI:45764"/>
        <dbReference type="ChEBI" id="CHEBI:50058"/>
        <dbReference type="EC" id="1.8.4.12"/>
    </reaction>
</comment>
<comment type="subcellular location">
    <subcellularLocation>
        <location evidence="3">Cell membrane</location>
        <topology evidence="3">Peripheral membrane protein</topology>
    </subcellularLocation>
</comment>
<comment type="similarity">
    <text evidence="3">In the N-terminal section; belongs to the MsrA Met sulfoxide reductase family.</text>
</comment>
<comment type="similarity">
    <text evidence="3">In the C-terminal section; belongs to the MsrB Met sulfoxide reductase family.</text>
</comment>
<reference key="1">
    <citation type="journal article" date="2001" name="Science">
        <title>Complete genome sequence of a virulent isolate of Streptococcus pneumoniae.</title>
        <authorList>
            <person name="Tettelin H."/>
            <person name="Nelson K.E."/>
            <person name="Paulsen I.T."/>
            <person name="Eisen J.A."/>
            <person name="Read T.D."/>
            <person name="Peterson S.N."/>
            <person name="Heidelberg J.F."/>
            <person name="DeBoy R.T."/>
            <person name="Haft D.H."/>
            <person name="Dodson R.J."/>
            <person name="Durkin A.S."/>
            <person name="Gwinn M.L."/>
            <person name="Kolonay J.F."/>
            <person name="Nelson W.C."/>
            <person name="Peterson J.D."/>
            <person name="Umayam L.A."/>
            <person name="White O."/>
            <person name="Salzberg S.L."/>
            <person name="Lewis M.R."/>
            <person name="Radune D."/>
            <person name="Holtzapple E.K."/>
            <person name="Khouri H.M."/>
            <person name="Wolf A.M."/>
            <person name="Utterback T.R."/>
            <person name="Hansen C.L."/>
            <person name="McDonald L.A."/>
            <person name="Feldblyum T.V."/>
            <person name="Angiuoli S.V."/>
            <person name="Dickinson T."/>
            <person name="Hickey E.K."/>
            <person name="Holt I.E."/>
            <person name="Loftus B.J."/>
            <person name="Yang F."/>
            <person name="Smith H.O."/>
            <person name="Venter J.C."/>
            <person name="Dougherty B.A."/>
            <person name="Morrison D.A."/>
            <person name="Hollingshead S.K."/>
            <person name="Fraser C.M."/>
        </authorList>
    </citation>
    <scope>NUCLEOTIDE SEQUENCE [LARGE SCALE GENOMIC DNA]</scope>
    <source>
        <strain>ATCC BAA-334 / TIGR4</strain>
    </source>
</reference>
<sequence>MAEIYLAGGCFWGLEEYFSRISGVLETSVGYANGQVETTNYQLLKETDHAETVQVIYDEKEVSLREILLYYFRVIDPLSINQQGNDRGRQYRTGIYYQDEADLPAIYTVVQEQERMLGRKIAVEVEQLRHYILAEDYHQDYLRKNPSGYCHIDVTDADKPLIDAANYEKPSQEVLKASLSEESYRVTQEAATEAPFTNAYDQTFEEGIYVDITTGEPLFFAKDKFASGCGWPSFSRPISKELIHYYKDLSHGMERIEVRSRSGSAHLGHVFTDGPRELGGLRYCINSASLRFVAKDEMEKAGYGYLLPYLNK</sequence>
<name>MSAB1_STRPN</name>
<organism>
    <name type="scientific">Streptococcus pneumoniae serotype 4 (strain ATCC BAA-334 / TIGR4)</name>
    <dbReference type="NCBI Taxonomy" id="170187"/>
    <lineage>
        <taxon>Bacteria</taxon>
        <taxon>Bacillati</taxon>
        <taxon>Bacillota</taxon>
        <taxon>Bacilli</taxon>
        <taxon>Lactobacillales</taxon>
        <taxon>Streptococcaceae</taxon>
        <taxon>Streptococcus</taxon>
    </lineage>
</organism>
<feature type="chain" id="PRO_0000138517" description="Peptide methionine sulfoxide reductase MsrA/MsrB 1">
    <location>
        <begin position="1"/>
        <end position="312"/>
    </location>
</feature>
<feature type="domain" description="MsrB" evidence="2">
    <location>
        <begin position="172"/>
        <end position="295"/>
    </location>
</feature>
<feature type="region of interest" description="Peptide methionine sulfoxide reductase">
    <location>
        <begin position="1"/>
        <end position="155"/>
    </location>
</feature>
<feature type="active site" evidence="1">
    <location>
        <position position="10"/>
    </location>
</feature>
<feature type="active site" description="Nucleophile" evidence="2">
    <location>
        <position position="284"/>
    </location>
</feature>
<feature type="strand" evidence="4">
    <location>
        <begin position="2"/>
        <end position="7"/>
    </location>
</feature>
<feature type="helix" evidence="4">
    <location>
        <begin position="11"/>
        <end position="18"/>
    </location>
</feature>
<feature type="strand" evidence="4">
    <location>
        <begin position="24"/>
        <end position="33"/>
    </location>
</feature>
<feature type="strand" evidence="4">
    <location>
        <begin position="35"/>
        <end position="37"/>
    </location>
</feature>
<feature type="turn" evidence="4">
    <location>
        <begin position="41"/>
        <end position="43"/>
    </location>
</feature>
<feature type="helix" evidence="4">
    <location>
        <begin position="44"/>
        <end position="47"/>
    </location>
</feature>
<feature type="strand" evidence="4">
    <location>
        <begin position="50"/>
        <end position="57"/>
    </location>
</feature>
<feature type="turn" evidence="4">
    <location>
        <begin position="59"/>
        <end position="61"/>
    </location>
</feature>
<feature type="helix" evidence="4">
    <location>
        <begin position="64"/>
        <end position="74"/>
    </location>
</feature>
<feature type="strand" evidence="4">
    <location>
        <begin position="80"/>
        <end position="83"/>
    </location>
</feature>
<feature type="strand" evidence="4">
    <location>
        <begin position="86"/>
        <end position="88"/>
    </location>
</feature>
<feature type="helix" evidence="4">
    <location>
        <begin position="89"/>
        <end position="91"/>
    </location>
</feature>
<feature type="strand" evidence="4">
    <location>
        <begin position="94"/>
        <end position="98"/>
    </location>
</feature>
<feature type="helix" evidence="4">
    <location>
        <begin position="100"/>
        <end position="102"/>
    </location>
</feature>
<feature type="helix" evidence="4">
    <location>
        <begin position="103"/>
        <end position="117"/>
    </location>
</feature>
<feature type="strand" evidence="4">
    <location>
        <begin position="124"/>
        <end position="127"/>
    </location>
</feature>
<feature type="strand" evidence="4">
    <location>
        <begin position="131"/>
        <end position="133"/>
    </location>
</feature>
<feature type="helix" evidence="4">
    <location>
        <begin position="136"/>
        <end position="138"/>
    </location>
</feature>
<feature type="helix" evidence="4">
    <location>
        <begin position="141"/>
        <end position="144"/>
    </location>
</feature>
<feature type="helix" evidence="4">
    <location>
        <begin position="154"/>
        <end position="157"/>
    </location>
</feature>
<feature type="helix" evidence="4">
    <location>
        <begin position="164"/>
        <end position="167"/>
    </location>
</feature>
<feature type="helix" evidence="4">
    <location>
        <begin position="172"/>
        <end position="178"/>
    </location>
</feature>
<feature type="helix" evidence="4">
    <location>
        <begin position="181"/>
        <end position="189"/>
    </location>
</feature>
<feature type="strand" evidence="4">
    <location>
        <begin position="195"/>
        <end position="198"/>
    </location>
</feature>
<feature type="turn" evidence="4">
    <location>
        <begin position="199"/>
        <end position="202"/>
    </location>
</feature>
<feature type="strand" evidence="4">
    <location>
        <begin position="206"/>
        <end position="211"/>
    </location>
</feature>
<feature type="turn" evidence="4">
    <location>
        <begin position="212"/>
        <end position="214"/>
    </location>
</feature>
<feature type="strand" evidence="4">
    <location>
        <begin position="217"/>
        <end position="220"/>
    </location>
</feature>
<feature type="helix" evidence="4">
    <location>
        <begin position="221"/>
        <end position="223"/>
    </location>
</feature>
<feature type="strand" evidence="4">
    <location>
        <begin position="229"/>
        <end position="231"/>
    </location>
</feature>
<feature type="strand" evidence="4">
    <location>
        <begin position="233"/>
        <end position="236"/>
    </location>
</feature>
<feature type="helix" evidence="4">
    <location>
        <begin position="240"/>
        <end position="242"/>
    </location>
</feature>
<feature type="strand" evidence="4">
    <location>
        <begin position="243"/>
        <end position="248"/>
    </location>
</feature>
<feature type="strand" evidence="4">
    <location>
        <begin position="255"/>
        <end position="263"/>
    </location>
</feature>
<feature type="strand" evidence="4">
    <location>
        <begin position="266"/>
        <end position="272"/>
    </location>
</feature>
<feature type="turn" evidence="4">
    <location>
        <begin position="276"/>
        <end position="279"/>
    </location>
</feature>
<feature type="strand" evidence="4">
    <location>
        <begin position="282"/>
        <end position="285"/>
    </location>
</feature>
<feature type="helix" evidence="4">
    <location>
        <begin position="287"/>
        <end position="289"/>
    </location>
</feature>
<feature type="strand" evidence="4">
    <location>
        <begin position="290"/>
        <end position="294"/>
    </location>
</feature>
<feature type="helix" evidence="4">
    <location>
        <begin position="295"/>
        <end position="301"/>
    </location>
</feature>
<feature type="helix" evidence="4">
    <location>
        <begin position="304"/>
        <end position="309"/>
    </location>
</feature>
<evidence type="ECO:0000250" key="1"/>
<evidence type="ECO:0000255" key="2">
    <source>
        <dbReference type="PROSITE-ProRule" id="PRU01126"/>
    </source>
</evidence>
<evidence type="ECO:0000305" key="3"/>
<evidence type="ECO:0007829" key="4">
    <source>
        <dbReference type="PDB" id="3E0M"/>
    </source>
</evidence>
<proteinExistence type="evidence at protein level"/>
<gene>
    <name type="primary">msrAB1</name>
    <name type="synonym">exp3</name>
    <name type="synonym">msrA</name>
    <name type="ordered locus">SP_1359</name>
</gene>
<accession>P0A3Q9</accession>
<accession>P35593</accession>
<keyword id="KW-0002">3D-structure</keyword>
<keyword id="KW-1003">Cell membrane</keyword>
<keyword id="KW-0472">Membrane</keyword>
<keyword id="KW-0511">Multifunctional enzyme</keyword>
<keyword id="KW-0560">Oxidoreductase</keyword>
<keyword id="KW-1185">Reference proteome</keyword>
<dbReference type="EC" id="1.8.4.11"/>
<dbReference type="EC" id="1.8.4.12"/>
<dbReference type="EMBL" id="AE005672">
    <property type="protein sequence ID" value="AAK75457.1"/>
    <property type="molecule type" value="Genomic_DNA"/>
</dbReference>
<dbReference type="PIR" id="H95157">
    <property type="entry name" value="H95157"/>
</dbReference>
<dbReference type="PDB" id="3E0M">
    <property type="method" value="X-ray"/>
    <property type="resolution" value="2.40 A"/>
    <property type="chains" value="A/B/C/D=1-312"/>
</dbReference>
<dbReference type="PDBsum" id="3E0M"/>
<dbReference type="SMR" id="P0A3Q9"/>
<dbReference type="PaxDb" id="170187-SP_1359"/>
<dbReference type="EnsemblBacteria" id="AAK75457">
    <property type="protein sequence ID" value="AAK75457"/>
    <property type="gene ID" value="SP_1359"/>
</dbReference>
<dbReference type="KEGG" id="spn:SP_1359"/>
<dbReference type="eggNOG" id="COG0225">
    <property type="taxonomic scope" value="Bacteria"/>
</dbReference>
<dbReference type="eggNOG" id="COG0229">
    <property type="taxonomic scope" value="Bacteria"/>
</dbReference>
<dbReference type="PhylomeDB" id="P0A3Q9"/>
<dbReference type="BioCyc" id="SPNE170187:G1FZB-1366-MONOMER"/>
<dbReference type="EvolutionaryTrace" id="P0A3Q9"/>
<dbReference type="Proteomes" id="UP000000585">
    <property type="component" value="Chromosome"/>
</dbReference>
<dbReference type="GO" id="GO:0005737">
    <property type="term" value="C:cytoplasm"/>
    <property type="evidence" value="ECO:0007669"/>
    <property type="project" value="TreeGrafter"/>
</dbReference>
<dbReference type="GO" id="GO:0005886">
    <property type="term" value="C:plasma membrane"/>
    <property type="evidence" value="ECO:0007669"/>
    <property type="project" value="UniProtKB-SubCell"/>
</dbReference>
<dbReference type="GO" id="GO:0033744">
    <property type="term" value="F:L-methionine:thioredoxin-disulfide S-oxidoreductase activity"/>
    <property type="evidence" value="ECO:0007669"/>
    <property type="project" value="RHEA"/>
</dbReference>
<dbReference type="GO" id="GO:0033743">
    <property type="term" value="F:peptide-methionine (R)-S-oxide reductase activity"/>
    <property type="evidence" value="ECO:0007669"/>
    <property type="project" value="UniProtKB-UniRule"/>
</dbReference>
<dbReference type="GO" id="GO:0008113">
    <property type="term" value="F:peptide-methionine (S)-S-oxide reductase activity"/>
    <property type="evidence" value="ECO:0007669"/>
    <property type="project" value="UniProtKB-UniRule"/>
</dbReference>
<dbReference type="GO" id="GO:0036211">
    <property type="term" value="P:protein modification process"/>
    <property type="evidence" value="ECO:0007669"/>
    <property type="project" value="UniProtKB-UniRule"/>
</dbReference>
<dbReference type="GO" id="GO:0030091">
    <property type="term" value="P:protein repair"/>
    <property type="evidence" value="ECO:0007669"/>
    <property type="project" value="InterPro"/>
</dbReference>
<dbReference type="GO" id="GO:0006979">
    <property type="term" value="P:response to oxidative stress"/>
    <property type="evidence" value="ECO:0007669"/>
    <property type="project" value="InterPro"/>
</dbReference>
<dbReference type="FunFam" id="3.30.1060.10:FF:000007">
    <property type="entry name" value="Peptide methionine sulfoxide reductase msrA/msrB"/>
    <property type="match status" value="1"/>
</dbReference>
<dbReference type="FunFam" id="2.170.150.20:FF:000003">
    <property type="entry name" value="Peptide methionine sulfoxide reductase MsrB"/>
    <property type="match status" value="1"/>
</dbReference>
<dbReference type="Gene3D" id="2.170.150.20">
    <property type="entry name" value="Peptide methionine sulfoxide reductase"/>
    <property type="match status" value="1"/>
</dbReference>
<dbReference type="Gene3D" id="3.30.1060.10">
    <property type="entry name" value="Peptide methionine sulphoxide reductase MsrA"/>
    <property type="match status" value="1"/>
</dbReference>
<dbReference type="HAMAP" id="MF_01401">
    <property type="entry name" value="MsrA"/>
    <property type="match status" value="1"/>
</dbReference>
<dbReference type="HAMAP" id="MF_01400">
    <property type="entry name" value="MsrB"/>
    <property type="match status" value="1"/>
</dbReference>
<dbReference type="InterPro" id="IPR002569">
    <property type="entry name" value="Met_Sox_Rdtase_MsrA_dom"/>
</dbReference>
<dbReference type="InterPro" id="IPR036509">
    <property type="entry name" value="Met_Sox_Rdtase_MsrA_sf"/>
</dbReference>
<dbReference type="InterPro" id="IPR028427">
    <property type="entry name" value="Met_Sox_Rdtase_MsrB"/>
</dbReference>
<dbReference type="InterPro" id="IPR002579">
    <property type="entry name" value="Met_Sox_Rdtase_MsrB_dom"/>
</dbReference>
<dbReference type="InterPro" id="IPR011057">
    <property type="entry name" value="Mss4-like_sf"/>
</dbReference>
<dbReference type="NCBIfam" id="TIGR00401">
    <property type="entry name" value="msrA"/>
    <property type="match status" value="1"/>
</dbReference>
<dbReference type="NCBIfam" id="TIGR00357">
    <property type="entry name" value="peptide-methionine (R)-S-oxide reductase MsrB"/>
    <property type="match status" value="1"/>
</dbReference>
<dbReference type="PANTHER" id="PTHR10173">
    <property type="entry name" value="METHIONINE SULFOXIDE REDUCTASE"/>
    <property type="match status" value="1"/>
</dbReference>
<dbReference type="PANTHER" id="PTHR10173:SF60">
    <property type="entry name" value="PEPTIDE METHIONINE SULFOXIDE REDUCTASE MSRA_MSRB 1"/>
    <property type="match status" value="1"/>
</dbReference>
<dbReference type="Pfam" id="PF01625">
    <property type="entry name" value="PMSR"/>
    <property type="match status" value="1"/>
</dbReference>
<dbReference type="Pfam" id="PF01641">
    <property type="entry name" value="SelR"/>
    <property type="match status" value="1"/>
</dbReference>
<dbReference type="SUPFAM" id="SSF51316">
    <property type="entry name" value="Mss4-like"/>
    <property type="match status" value="1"/>
</dbReference>
<dbReference type="SUPFAM" id="SSF55068">
    <property type="entry name" value="Peptide methionine sulfoxide reductase"/>
    <property type="match status" value="1"/>
</dbReference>
<dbReference type="PROSITE" id="PS51790">
    <property type="entry name" value="MSRB"/>
    <property type="match status" value="1"/>
</dbReference>